<sequence>MDKIIIQGARENNLKNIFLEIPKNQFVVFTGLSGSGKSTLAFDTLYAEGQRRYLESLSSYARQFLDKVGKPNVDKIEGLTPAIAIDQKTTSKNPRSTVGTITEIYDYLRLLFARVGEQFCPTCLEPISSMSTSDIISQICHLEENSKIIILAPIIKDKKGSFNDKLESLRLKGYVRAFVDGVMVRLDEEIHLHKTKKHTIEAVVDRVVVNNENASRIASAIEKALKESYGELEVEILQDNAPSIRKHYSEHKACFKCKMSFEELEPLSFSFNSPKGACESCLGLGTKFSLDISKILDPNTPLNQGAIKVIFGYNRSYYAQMFEGFCEYNGIDSALCFNELNKEQQDALLYGNGTEISFHFKNSPLKRPWKGIIQIAYDMFKEQKDLSDYMSEKTCSSCEGHRLKASSLSVQVAGLKMADFLTKPIEEVYHFFNDPTHFSYLNEQEKKIAEPILKEILERVFFLYDVGLGYLTLGRDARTISGGESQRIRIASQIGSGLTGVLYVLDEPSIGLHEKDTLKLINTLRNLQKKGNTLIVVEHDKETIKHADFVVDIGPKAGRHGGEVVFSGSVKELLQNNHSTALYLNGTKKIERPKFELPKEKHFLEIKNVNINNIKNLSVQIPLKQLVCITGVSGSGKSSLILQTLLPTAQTLLNHAKKTQSLNGVEIVGLEHLDKVIYLDQAPIGKTPRSNPATYTGVMDEIRILFAEQKEAKILGYSASRFSFNVKGGRCEKCQGDGDIKIEMHFLPDVLVQCDSCKGAKYNPQTLEIKVKGKSIADVLNMSVEEAYEFFAKFPKIAVKLKTLMDVGLGYITLGQNATTLSGGEAQRIKLAKELSKKDTGKTLYILDEPTTGLHFEDVNHLLQVLHSLVALGNSMLVIEHNLDIIKNADYIIDMGPDGGDKGGKVIASGTPLEVAQNCEKTQSYTGKFLALELK</sequence>
<gene>
    <name evidence="1" type="primary">uvrA</name>
    <name type="ordered locus">HP_0705</name>
</gene>
<name>UVRA_HELPY</name>
<accession>P56474</accession>
<reference key="1">
    <citation type="journal article" date="1997" name="Nature">
        <title>The complete genome sequence of the gastric pathogen Helicobacter pylori.</title>
        <authorList>
            <person name="Tomb J.-F."/>
            <person name="White O."/>
            <person name="Kerlavage A.R."/>
            <person name="Clayton R.A."/>
            <person name="Sutton G.G."/>
            <person name="Fleischmann R.D."/>
            <person name="Ketchum K.A."/>
            <person name="Klenk H.-P."/>
            <person name="Gill S.R."/>
            <person name="Dougherty B.A."/>
            <person name="Nelson K.E."/>
            <person name="Quackenbush J."/>
            <person name="Zhou L."/>
            <person name="Kirkness E.F."/>
            <person name="Peterson S.N."/>
            <person name="Loftus B.J."/>
            <person name="Richardson D.L."/>
            <person name="Dodson R.J."/>
            <person name="Khalak H.G."/>
            <person name="Glodek A."/>
            <person name="McKenney K."/>
            <person name="FitzGerald L.M."/>
            <person name="Lee N."/>
            <person name="Adams M.D."/>
            <person name="Hickey E.K."/>
            <person name="Berg D.E."/>
            <person name="Gocayne J.D."/>
            <person name="Utterback T.R."/>
            <person name="Peterson J.D."/>
            <person name="Kelley J.M."/>
            <person name="Cotton M.D."/>
            <person name="Weidman J.F."/>
            <person name="Fujii C."/>
            <person name="Bowman C."/>
            <person name="Watthey L."/>
            <person name="Wallin E."/>
            <person name="Hayes W.S."/>
            <person name="Borodovsky M."/>
            <person name="Karp P.D."/>
            <person name="Smith H.O."/>
            <person name="Fraser C.M."/>
            <person name="Venter J.C."/>
        </authorList>
    </citation>
    <scope>NUCLEOTIDE SEQUENCE [LARGE SCALE GENOMIC DNA]</scope>
    <source>
        <strain>ATCC 700392 / 26695</strain>
    </source>
</reference>
<dbReference type="EMBL" id="AE000511">
    <property type="protein sequence ID" value="AAD07755.1"/>
    <property type="molecule type" value="Genomic_DNA"/>
</dbReference>
<dbReference type="PIR" id="A64608">
    <property type="entry name" value="A64608"/>
</dbReference>
<dbReference type="RefSeq" id="NP_207499.1">
    <property type="nucleotide sequence ID" value="NC_000915.1"/>
</dbReference>
<dbReference type="SMR" id="P56474"/>
<dbReference type="DIP" id="DIP-3159N"/>
<dbReference type="FunCoup" id="P56474">
    <property type="interactions" value="228"/>
</dbReference>
<dbReference type="IntAct" id="P56474">
    <property type="interactions" value="28"/>
</dbReference>
<dbReference type="MINT" id="P56474"/>
<dbReference type="STRING" id="85962.HP_0705"/>
<dbReference type="PaxDb" id="85962-C694_03630"/>
<dbReference type="EnsemblBacteria" id="AAD07755">
    <property type="protein sequence ID" value="AAD07755"/>
    <property type="gene ID" value="HP_0705"/>
</dbReference>
<dbReference type="KEGG" id="hpy:HP_0705"/>
<dbReference type="PATRIC" id="fig|85962.8.peg.736"/>
<dbReference type="eggNOG" id="COG0178">
    <property type="taxonomic scope" value="Bacteria"/>
</dbReference>
<dbReference type="InParanoid" id="P56474"/>
<dbReference type="OrthoDB" id="9809851at2"/>
<dbReference type="PhylomeDB" id="P56474"/>
<dbReference type="Proteomes" id="UP000000429">
    <property type="component" value="Chromosome"/>
</dbReference>
<dbReference type="GO" id="GO:0005737">
    <property type="term" value="C:cytoplasm"/>
    <property type="evidence" value="ECO:0007669"/>
    <property type="project" value="UniProtKB-SubCell"/>
</dbReference>
<dbReference type="GO" id="GO:0009380">
    <property type="term" value="C:excinuclease repair complex"/>
    <property type="evidence" value="ECO:0007669"/>
    <property type="project" value="InterPro"/>
</dbReference>
<dbReference type="GO" id="GO:0005524">
    <property type="term" value="F:ATP binding"/>
    <property type="evidence" value="ECO:0007669"/>
    <property type="project" value="UniProtKB-UniRule"/>
</dbReference>
<dbReference type="GO" id="GO:0016887">
    <property type="term" value="F:ATP hydrolysis activity"/>
    <property type="evidence" value="ECO:0007669"/>
    <property type="project" value="InterPro"/>
</dbReference>
<dbReference type="GO" id="GO:0003677">
    <property type="term" value="F:DNA binding"/>
    <property type="evidence" value="ECO:0007669"/>
    <property type="project" value="UniProtKB-UniRule"/>
</dbReference>
<dbReference type="GO" id="GO:0009381">
    <property type="term" value="F:excinuclease ABC activity"/>
    <property type="evidence" value="ECO:0007669"/>
    <property type="project" value="UniProtKB-UniRule"/>
</dbReference>
<dbReference type="GO" id="GO:0008270">
    <property type="term" value="F:zinc ion binding"/>
    <property type="evidence" value="ECO:0007669"/>
    <property type="project" value="UniProtKB-UniRule"/>
</dbReference>
<dbReference type="GO" id="GO:0006289">
    <property type="term" value="P:nucleotide-excision repair"/>
    <property type="evidence" value="ECO:0007669"/>
    <property type="project" value="UniProtKB-UniRule"/>
</dbReference>
<dbReference type="GO" id="GO:0009432">
    <property type="term" value="P:SOS response"/>
    <property type="evidence" value="ECO:0007669"/>
    <property type="project" value="UniProtKB-UniRule"/>
</dbReference>
<dbReference type="CDD" id="cd03270">
    <property type="entry name" value="ABC_UvrA_I"/>
    <property type="match status" value="1"/>
</dbReference>
<dbReference type="CDD" id="cd03271">
    <property type="entry name" value="ABC_UvrA_II"/>
    <property type="match status" value="1"/>
</dbReference>
<dbReference type="Gene3D" id="1.10.8.280">
    <property type="entry name" value="ABC transporter ATPase domain-like"/>
    <property type="match status" value="1"/>
</dbReference>
<dbReference type="Gene3D" id="1.20.1580.10">
    <property type="entry name" value="ABC transporter ATPase like domain"/>
    <property type="match status" value="2"/>
</dbReference>
<dbReference type="Gene3D" id="3.30.1490.20">
    <property type="entry name" value="ATP-grasp fold, A domain"/>
    <property type="match status" value="1"/>
</dbReference>
<dbReference type="Gene3D" id="3.40.50.300">
    <property type="entry name" value="P-loop containing nucleotide triphosphate hydrolases"/>
    <property type="match status" value="2"/>
</dbReference>
<dbReference type="HAMAP" id="MF_00205">
    <property type="entry name" value="UvrA"/>
    <property type="match status" value="1"/>
</dbReference>
<dbReference type="InterPro" id="IPR003439">
    <property type="entry name" value="ABC_transporter-like_ATP-bd"/>
</dbReference>
<dbReference type="InterPro" id="IPR017871">
    <property type="entry name" value="ABC_transporter-like_CS"/>
</dbReference>
<dbReference type="InterPro" id="IPR013815">
    <property type="entry name" value="ATP_grasp_subdomain_1"/>
</dbReference>
<dbReference type="InterPro" id="IPR027417">
    <property type="entry name" value="P-loop_NTPase"/>
</dbReference>
<dbReference type="InterPro" id="IPR004602">
    <property type="entry name" value="UvrA"/>
</dbReference>
<dbReference type="InterPro" id="IPR041552">
    <property type="entry name" value="UvrA_DNA-bd"/>
</dbReference>
<dbReference type="InterPro" id="IPR041102">
    <property type="entry name" value="UvrA_inter"/>
</dbReference>
<dbReference type="NCBIfam" id="NF001503">
    <property type="entry name" value="PRK00349.1"/>
    <property type="match status" value="1"/>
</dbReference>
<dbReference type="NCBIfam" id="TIGR00630">
    <property type="entry name" value="uvra"/>
    <property type="match status" value="1"/>
</dbReference>
<dbReference type="PANTHER" id="PTHR43152">
    <property type="entry name" value="UVRABC SYSTEM PROTEIN A"/>
    <property type="match status" value="1"/>
</dbReference>
<dbReference type="PANTHER" id="PTHR43152:SF3">
    <property type="entry name" value="UVRABC SYSTEM PROTEIN A"/>
    <property type="match status" value="1"/>
</dbReference>
<dbReference type="Pfam" id="PF17755">
    <property type="entry name" value="UvrA_DNA-bind"/>
    <property type="match status" value="1"/>
</dbReference>
<dbReference type="Pfam" id="PF17760">
    <property type="entry name" value="UvrA_inter"/>
    <property type="match status" value="1"/>
</dbReference>
<dbReference type="SUPFAM" id="SSF52540">
    <property type="entry name" value="P-loop containing nucleoside triphosphate hydrolases"/>
    <property type="match status" value="2"/>
</dbReference>
<dbReference type="PROSITE" id="PS00211">
    <property type="entry name" value="ABC_TRANSPORTER_1"/>
    <property type="match status" value="2"/>
</dbReference>
<dbReference type="PROSITE" id="PS50893">
    <property type="entry name" value="ABC_TRANSPORTER_2"/>
    <property type="match status" value="1"/>
</dbReference>
<comment type="function">
    <text evidence="1">The UvrABC repair system catalyzes the recognition and processing of DNA lesions. UvrA is an ATPase and a DNA-binding protein. A damage recognition complex composed of 2 UvrA and 2 UvrB subunits scans DNA for abnormalities. When the presence of a lesion has been verified by UvrB, the UvrA molecules dissociate.</text>
</comment>
<comment type="subunit">
    <text evidence="1">Forms a heterotetramer with UvrB during the search for lesions.</text>
</comment>
<comment type="subcellular location">
    <subcellularLocation>
        <location evidence="1">Cytoplasm</location>
    </subcellularLocation>
</comment>
<comment type="similarity">
    <text evidence="1">Belongs to the ABC transporter superfamily. UvrA family.</text>
</comment>
<organism>
    <name type="scientific">Helicobacter pylori (strain ATCC 700392 / 26695)</name>
    <name type="common">Campylobacter pylori</name>
    <dbReference type="NCBI Taxonomy" id="85962"/>
    <lineage>
        <taxon>Bacteria</taxon>
        <taxon>Pseudomonadati</taxon>
        <taxon>Campylobacterota</taxon>
        <taxon>Epsilonproteobacteria</taxon>
        <taxon>Campylobacterales</taxon>
        <taxon>Helicobacteraceae</taxon>
        <taxon>Helicobacter</taxon>
    </lineage>
</organism>
<protein>
    <recommendedName>
        <fullName evidence="1">UvrABC system protein A</fullName>
        <shortName evidence="1">UvrA protein</shortName>
    </recommendedName>
    <alternativeName>
        <fullName evidence="1">Excinuclease ABC subunit A</fullName>
    </alternativeName>
</protein>
<proteinExistence type="inferred from homology"/>
<feature type="chain" id="PRO_0000093054" description="UvrABC system protein A">
    <location>
        <begin position="1"/>
        <end position="935"/>
    </location>
</feature>
<feature type="domain" description="ABC transporter 1" evidence="1">
    <location>
        <begin position="310"/>
        <end position="579"/>
    </location>
</feature>
<feature type="domain" description="ABC transporter 2" evidence="1">
    <location>
        <begin position="599"/>
        <end position="931"/>
    </location>
</feature>
<feature type="zinc finger region" description="C4-type" evidence="1">
    <location>
        <begin position="254"/>
        <end position="281"/>
    </location>
</feature>
<feature type="zinc finger region" description="C4-type" evidence="1">
    <location>
        <begin position="731"/>
        <end position="757"/>
    </location>
</feature>
<feature type="binding site" evidence="1">
    <location>
        <begin position="31"/>
        <end position="38"/>
    </location>
    <ligand>
        <name>ATP</name>
        <dbReference type="ChEBI" id="CHEBI:30616"/>
    </ligand>
</feature>
<feature type="binding site" evidence="1">
    <location>
        <begin position="631"/>
        <end position="638"/>
    </location>
    <ligand>
        <name>ATP</name>
        <dbReference type="ChEBI" id="CHEBI:30616"/>
    </ligand>
</feature>
<evidence type="ECO:0000255" key="1">
    <source>
        <dbReference type="HAMAP-Rule" id="MF_00205"/>
    </source>
</evidence>
<keyword id="KW-0067">ATP-binding</keyword>
<keyword id="KW-0963">Cytoplasm</keyword>
<keyword id="KW-0227">DNA damage</keyword>
<keyword id="KW-0228">DNA excision</keyword>
<keyword id="KW-0234">DNA repair</keyword>
<keyword id="KW-0238">DNA-binding</keyword>
<keyword id="KW-0267">Excision nuclease</keyword>
<keyword id="KW-0479">Metal-binding</keyword>
<keyword id="KW-0547">Nucleotide-binding</keyword>
<keyword id="KW-1185">Reference proteome</keyword>
<keyword id="KW-0677">Repeat</keyword>
<keyword id="KW-0742">SOS response</keyword>
<keyword id="KW-0862">Zinc</keyword>
<keyword id="KW-0863">Zinc-finger</keyword>